<protein>
    <recommendedName>
        <fullName>Phosphatidylinositol N-acetylglucosaminyltransferase subunit A</fullName>
        <ecNumber>2.4.1.198</ecNumber>
    </recommendedName>
    <alternativeName>
        <fullName>GlcNAc-PI synthesis protein</fullName>
    </alternativeName>
    <alternativeName>
        <fullName>Phosphatidylinositol-glycan biosynthesis class A protein</fullName>
    </alternativeName>
</protein>
<keyword id="KW-0256">Endoplasmic reticulum</keyword>
<keyword id="KW-0328">Glycosyltransferase</keyword>
<keyword id="KW-0337">GPI-anchor biosynthesis</keyword>
<keyword id="KW-0472">Membrane</keyword>
<keyword id="KW-1185">Reference proteome</keyword>
<keyword id="KW-0808">Transferase</keyword>
<keyword id="KW-0812">Transmembrane</keyword>
<keyword id="KW-1133">Transmembrane helix</keyword>
<dbReference type="EC" id="2.4.1.198"/>
<dbReference type="EMBL" id="KJ138805">
    <property type="protein sequence ID" value="AHL38745.1"/>
    <property type="molecule type" value="mRNA"/>
</dbReference>
<dbReference type="EMBL" id="AL138649">
    <property type="protein sequence ID" value="CAB72148.1"/>
    <property type="status" value="ALT_SEQ"/>
    <property type="molecule type" value="Genomic_DNA"/>
</dbReference>
<dbReference type="EMBL" id="CP002686">
    <property type="protein sequence ID" value="AEE77993.1"/>
    <property type="molecule type" value="Genomic_DNA"/>
</dbReference>
<dbReference type="EMBL" id="CP002686">
    <property type="protein sequence ID" value="AEE77994.1"/>
    <property type="molecule type" value="Genomic_DNA"/>
</dbReference>
<dbReference type="EMBL" id="CP002686">
    <property type="protein sequence ID" value="ANM64654.1"/>
    <property type="molecule type" value="Genomic_DNA"/>
</dbReference>
<dbReference type="EMBL" id="AY039602">
    <property type="protein sequence ID" value="AAK62657.1"/>
    <property type="molecule type" value="mRNA"/>
</dbReference>
<dbReference type="EMBL" id="AY081726">
    <property type="protein sequence ID" value="AAL87379.1"/>
    <property type="molecule type" value="mRNA"/>
</dbReference>
<dbReference type="PIR" id="T47450">
    <property type="entry name" value="T47450"/>
</dbReference>
<dbReference type="RefSeq" id="NP_001326667.1">
    <property type="nucleotide sequence ID" value="NM_001339193.1"/>
</dbReference>
<dbReference type="RefSeq" id="NP_566874.1">
    <property type="nucleotide sequence ID" value="NM_114379.3"/>
</dbReference>
<dbReference type="RefSeq" id="NP_850658.1">
    <property type="nucleotide sequence ID" value="NM_180327.2"/>
</dbReference>
<dbReference type="SMR" id="Q94BX4"/>
<dbReference type="FunCoup" id="Q94BX4">
    <property type="interactions" value="3388"/>
</dbReference>
<dbReference type="IntAct" id="Q94BX4">
    <property type="interactions" value="1"/>
</dbReference>
<dbReference type="STRING" id="3702.Q94BX4"/>
<dbReference type="CAZy" id="GT4">
    <property type="family name" value="Glycosyltransferase Family 4"/>
</dbReference>
<dbReference type="PaxDb" id="3702-AT3G45100.1"/>
<dbReference type="ProteomicsDB" id="236146"/>
<dbReference type="EnsemblPlants" id="AT3G45100.1">
    <property type="protein sequence ID" value="AT3G45100.1"/>
    <property type="gene ID" value="AT3G45100"/>
</dbReference>
<dbReference type="EnsemblPlants" id="AT3G45100.2">
    <property type="protein sequence ID" value="AT3G45100.2"/>
    <property type="gene ID" value="AT3G45100"/>
</dbReference>
<dbReference type="EnsemblPlants" id="AT3G45100.3">
    <property type="protein sequence ID" value="AT3G45100.3"/>
    <property type="gene ID" value="AT3G45100"/>
</dbReference>
<dbReference type="GeneID" id="823646"/>
<dbReference type="Gramene" id="AT3G45100.1">
    <property type="protein sequence ID" value="AT3G45100.1"/>
    <property type="gene ID" value="AT3G45100"/>
</dbReference>
<dbReference type="Gramene" id="AT3G45100.2">
    <property type="protein sequence ID" value="AT3G45100.2"/>
    <property type="gene ID" value="AT3G45100"/>
</dbReference>
<dbReference type="Gramene" id="AT3G45100.3">
    <property type="protein sequence ID" value="AT3G45100.3"/>
    <property type="gene ID" value="AT3G45100"/>
</dbReference>
<dbReference type="KEGG" id="ath:AT3G45100"/>
<dbReference type="Araport" id="AT3G45100"/>
<dbReference type="TAIR" id="AT3G45100">
    <property type="gene designation" value="SETH2"/>
</dbReference>
<dbReference type="eggNOG" id="KOG1111">
    <property type="taxonomic scope" value="Eukaryota"/>
</dbReference>
<dbReference type="HOGENOM" id="CLU_009583_19_0_1"/>
<dbReference type="InParanoid" id="Q94BX4"/>
<dbReference type="OMA" id="SHFWMSG"/>
<dbReference type="PhylomeDB" id="Q94BX4"/>
<dbReference type="BioCyc" id="ARA:AT3G45100-MONOMER"/>
<dbReference type="UniPathway" id="UPA00196"/>
<dbReference type="PRO" id="PR:Q94BX4"/>
<dbReference type="Proteomes" id="UP000006548">
    <property type="component" value="Chromosome 3"/>
</dbReference>
<dbReference type="ExpressionAtlas" id="Q94BX4">
    <property type="expression patterns" value="baseline and differential"/>
</dbReference>
<dbReference type="GO" id="GO:0000506">
    <property type="term" value="C:glycosylphosphatidylinositol-N-acetylglucosaminyltransferase (GPI-GnT) complex"/>
    <property type="evidence" value="ECO:0007669"/>
    <property type="project" value="InterPro"/>
</dbReference>
<dbReference type="GO" id="GO:0017176">
    <property type="term" value="F:phosphatidylinositol N-acetylglucosaminyltransferase activity"/>
    <property type="evidence" value="ECO:0007669"/>
    <property type="project" value="UniProtKB-EC"/>
</dbReference>
<dbReference type="GO" id="GO:0006506">
    <property type="term" value="P:GPI anchor biosynthetic process"/>
    <property type="evidence" value="ECO:0007669"/>
    <property type="project" value="UniProtKB-UniPathway"/>
</dbReference>
<dbReference type="GO" id="GO:0009846">
    <property type="term" value="P:pollen germination"/>
    <property type="evidence" value="ECO:0000315"/>
    <property type="project" value="UniProtKB"/>
</dbReference>
<dbReference type="GO" id="GO:0009860">
    <property type="term" value="P:pollen tube growth"/>
    <property type="evidence" value="ECO:0000315"/>
    <property type="project" value="UniProtKB"/>
</dbReference>
<dbReference type="CDD" id="cd03796">
    <property type="entry name" value="GT4_PIG-A-like"/>
    <property type="match status" value="1"/>
</dbReference>
<dbReference type="FunFam" id="3.40.50.2000:FF:000188">
    <property type="entry name" value="Phosphatidylinositol N-acetylglucosaminyltransferase gpi3 subunit"/>
    <property type="match status" value="1"/>
</dbReference>
<dbReference type="FunFam" id="3.40.50.2000:FF:000093">
    <property type="entry name" value="UDP-GlcNAc:PI a1-6 GlcNAc-transferase"/>
    <property type="match status" value="1"/>
</dbReference>
<dbReference type="Gene3D" id="3.40.50.2000">
    <property type="entry name" value="Glycogen Phosphorylase B"/>
    <property type="match status" value="2"/>
</dbReference>
<dbReference type="InterPro" id="IPR001296">
    <property type="entry name" value="Glyco_trans_1"/>
</dbReference>
<dbReference type="InterPro" id="IPR039507">
    <property type="entry name" value="PIG-A/GPI3"/>
</dbReference>
<dbReference type="InterPro" id="IPR013234">
    <property type="entry name" value="PIGA_GPI_anchor_biosynthesis"/>
</dbReference>
<dbReference type="PANTHER" id="PTHR45871">
    <property type="entry name" value="N-ACETYLGLUCOSAMINYL-PHOSPHATIDYLINOSITOL BIOSYNTHETIC PROTEIN"/>
    <property type="match status" value="1"/>
</dbReference>
<dbReference type="PANTHER" id="PTHR45871:SF1">
    <property type="entry name" value="PHOSPHATIDYLINOSITOL N-ACETYLGLUCOSAMINYLTRANSFERASE SUBUNIT A"/>
    <property type="match status" value="1"/>
</dbReference>
<dbReference type="Pfam" id="PF00534">
    <property type="entry name" value="Glycos_transf_1"/>
    <property type="match status" value="1"/>
</dbReference>
<dbReference type="Pfam" id="PF08288">
    <property type="entry name" value="PIGA"/>
    <property type="match status" value="1"/>
</dbReference>
<dbReference type="SUPFAM" id="SSF53756">
    <property type="entry name" value="UDP-Glycosyltransferase/glycogen phosphorylase"/>
    <property type="match status" value="1"/>
</dbReference>
<proteinExistence type="evidence at transcript level"/>
<reference key="1">
    <citation type="journal article" date="2014" name="Plant J.">
        <title>The plant glycosyltransferase clone collection for functional genomics.</title>
        <authorList>
            <person name="Lao J."/>
            <person name="Oikawa A."/>
            <person name="Bromley J.R."/>
            <person name="McInerney P."/>
            <person name="Suttangkakul A."/>
            <person name="Smith-Moritz A.M."/>
            <person name="Plahar H."/>
            <person name="Chiu T.-Y."/>
            <person name="Gonzalez Fernandez-Nino S.M.G."/>
            <person name="Ebert B."/>
            <person name="Yang F."/>
            <person name="Christiansen K.M."/>
            <person name="Hansen S.F."/>
            <person name="Stonebloom S."/>
            <person name="Adams P.D."/>
            <person name="Ronald P.C."/>
            <person name="Hillson N.J."/>
            <person name="Hadi M.Z."/>
            <person name="Vega-Sanchez M.E."/>
            <person name="Loque D."/>
            <person name="Scheller H.V."/>
            <person name="Heazlewood J.L."/>
        </authorList>
    </citation>
    <scope>NUCLEOTIDE SEQUENCE [MRNA]</scope>
</reference>
<reference key="2">
    <citation type="journal article" date="2000" name="Nature">
        <title>Sequence and analysis of chromosome 3 of the plant Arabidopsis thaliana.</title>
        <authorList>
            <person name="Salanoubat M."/>
            <person name="Lemcke K."/>
            <person name="Rieger M."/>
            <person name="Ansorge W."/>
            <person name="Unseld M."/>
            <person name="Fartmann B."/>
            <person name="Valle G."/>
            <person name="Bloecker H."/>
            <person name="Perez-Alonso M."/>
            <person name="Obermaier B."/>
            <person name="Delseny M."/>
            <person name="Boutry M."/>
            <person name="Grivell L.A."/>
            <person name="Mache R."/>
            <person name="Puigdomenech P."/>
            <person name="De Simone V."/>
            <person name="Choisne N."/>
            <person name="Artiguenave F."/>
            <person name="Robert C."/>
            <person name="Brottier P."/>
            <person name="Wincker P."/>
            <person name="Cattolico L."/>
            <person name="Weissenbach J."/>
            <person name="Saurin W."/>
            <person name="Quetier F."/>
            <person name="Schaefer M."/>
            <person name="Mueller-Auer S."/>
            <person name="Gabel C."/>
            <person name="Fuchs M."/>
            <person name="Benes V."/>
            <person name="Wurmbach E."/>
            <person name="Drzonek H."/>
            <person name="Erfle H."/>
            <person name="Jordan N."/>
            <person name="Bangert S."/>
            <person name="Wiedelmann R."/>
            <person name="Kranz H."/>
            <person name="Voss H."/>
            <person name="Holland R."/>
            <person name="Brandt P."/>
            <person name="Nyakatura G."/>
            <person name="Vezzi A."/>
            <person name="D'Angelo M."/>
            <person name="Pallavicini A."/>
            <person name="Toppo S."/>
            <person name="Simionati B."/>
            <person name="Conrad A."/>
            <person name="Hornischer K."/>
            <person name="Kauer G."/>
            <person name="Loehnert T.-H."/>
            <person name="Nordsiek G."/>
            <person name="Reichelt J."/>
            <person name="Scharfe M."/>
            <person name="Schoen O."/>
            <person name="Bargues M."/>
            <person name="Terol J."/>
            <person name="Climent J."/>
            <person name="Navarro P."/>
            <person name="Collado C."/>
            <person name="Perez-Perez A."/>
            <person name="Ottenwaelder B."/>
            <person name="Duchemin D."/>
            <person name="Cooke R."/>
            <person name="Laudie M."/>
            <person name="Berger-Llauro C."/>
            <person name="Purnelle B."/>
            <person name="Masuy D."/>
            <person name="de Haan M."/>
            <person name="Maarse A.C."/>
            <person name="Alcaraz J.-P."/>
            <person name="Cottet A."/>
            <person name="Casacuberta E."/>
            <person name="Monfort A."/>
            <person name="Argiriou A."/>
            <person name="Flores M."/>
            <person name="Liguori R."/>
            <person name="Vitale D."/>
            <person name="Mannhaupt G."/>
            <person name="Haase D."/>
            <person name="Schoof H."/>
            <person name="Rudd S."/>
            <person name="Zaccaria P."/>
            <person name="Mewes H.-W."/>
            <person name="Mayer K.F.X."/>
            <person name="Kaul S."/>
            <person name="Town C.D."/>
            <person name="Koo H.L."/>
            <person name="Tallon L.J."/>
            <person name="Jenkins J."/>
            <person name="Rooney T."/>
            <person name="Rizzo M."/>
            <person name="Walts A."/>
            <person name="Utterback T."/>
            <person name="Fujii C.Y."/>
            <person name="Shea T.P."/>
            <person name="Creasy T.H."/>
            <person name="Haas B."/>
            <person name="Maiti R."/>
            <person name="Wu D."/>
            <person name="Peterson J."/>
            <person name="Van Aken S."/>
            <person name="Pai G."/>
            <person name="Militscher J."/>
            <person name="Sellers P."/>
            <person name="Gill J.E."/>
            <person name="Feldblyum T.V."/>
            <person name="Preuss D."/>
            <person name="Lin X."/>
            <person name="Nierman W.C."/>
            <person name="Salzberg S.L."/>
            <person name="White O."/>
            <person name="Venter J.C."/>
            <person name="Fraser C.M."/>
            <person name="Kaneko T."/>
            <person name="Nakamura Y."/>
            <person name="Sato S."/>
            <person name="Kato T."/>
            <person name="Asamizu E."/>
            <person name="Sasamoto S."/>
            <person name="Kimura T."/>
            <person name="Idesawa K."/>
            <person name="Kawashima K."/>
            <person name="Kishida Y."/>
            <person name="Kiyokawa C."/>
            <person name="Kohara M."/>
            <person name="Matsumoto M."/>
            <person name="Matsuno A."/>
            <person name="Muraki A."/>
            <person name="Nakayama S."/>
            <person name="Nakazaki N."/>
            <person name="Shinpo S."/>
            <person name="Takeuchi C."/>
            <person name="Wada T."/>
            <person name="Watanabe A."/>
            <person name="Yamada M."/>
            <person name="Yasuda M."/>
            <person name="Tabata S."/>
        </authorList>
    </citation>
    <scope>NUCLEOTIDE SEQUENCE [LARGE SCALE GENOMIC DNA]</scope>
    <source>
        <strain>cv. Columbia</strain>
    </source>
</reference>
<reference key="3">
    <citation type="journal article" date="2017" name="Plant J.">
        <title>Araport11: a complete reannotation of the Arabidopsis thaliana reference genome.</title>
        <authorList>
            <person name="Cheng C.Y."/>
            <person name="Krishnakumar V."/>
            <person name="Chan A.P."/>
            <person name="Thibaud-Nissen F."/>
            <person name="Schobel S."/>
            <person name="Town C.D."/>
        </authorList>
    </citation>
    <scope>GENOME REANNOTATION</scope>
    <source>
        <strain>cv. Columbia</strain>
    </source>
</reference>
<reference key="4">
    <citation type="journal article" date="2003" name="Science">
        <title>Empirical analysis of transcriptional activity in the Arabidopsis genome.</title>
        <authorList>
            <person name="Yamada K."/>
            <person name="Lim J."/>
            <person name="Dale J.M."/>
            <person name="Chen H."/>
            <person name="Shinn P."/>
            <person name="Palm C.J."/>
            <person name="Southwick A.M."/>
            <person name="Wu H.C."/>
            <person name="Kim C.J."/>
            <person name="Nguyen M."/>
            <person name="Pham P.K."/>
            <person name="Cheuk R.F."/>
            <person name="Karlin-Newmann G."/>
            <person name="Liu S.X."/>
            <person name="Lam B."/>
            <person name="Sakano H."/>
            <person name="Wu T."/>
            <person name="Yu G."/>
            <person name="Miranda M."/>
            <person name="Quach H.L."/>
            <person name="Tripp M."/>
            <person name="Chang C.H."/>
            <person name="Lee J.M."/>
            <person name="Toriumi M.J."/>
            <person name="Chan M.M."/>
            <person name="Tang C.C."/>
            <person name="Onodera C.S."/>
            <person name="Deng J.M."/>
            <person name="Akiyama K."/>
            <person name="Ansari Y."/>
            <person name="Arakawa T."/>
            <person name="Banh J."/>
            <person name="Banno F."/>
            <person name="Bowser L."/>
            <person name="Brooks S.Y."/>
            <person name="Carninci P."/>
            <person name="Chao Q."/>
            <person name="Choy N."/>
            <person name="Enju A."/>
            <person name="Goldsmith A.D."/>
            <person name="Gurjal M."/>
            <person name="Hansen N.F."/>
            <person name="Hayashizaki Y."/>
            <person name="Johnson-Hopson C."/>
            <person name="Hsuan V.W."/>
            <person name="Iida K."/>
            <person name="Karnes M."/>
            <person name="Khan S."/>
            <person name="Koesema E."/>
            <person name="Ishida J."/>
            <person name="Jiang P.X."/>
            <person name="Jones T."/>
            <person name="Kawai J."/>
            <person name="Kamiya A."/>
            <person name="Meyers C."/>
            <person name="Nakajima M."/>
            <person name="Narusaka M."/>
            <person name="Seki M."/>
            <person name="Sakurai T."/>
            <person name="Satou M."/>
            <person name="Tamse R."/>
            <person name="Vaysberg M."/>
            <person name="Wallender E.K."/>
            <person name="Wong C."/>
            <person name="Yamamura Y."/>
            <person name="Yuan S."/>
            <person name="Shinozaki K."/>
            <person name="Davis R.W."/>
            <person name="Theologis A."/>
            <person name="Ecker J.R."/>
        </authorList>
    </citation>
    <scope>NUCLEOTIDE SEQUENCE [LARGE SCALE MRNA]</scope>
    <source>
        <strain>cv. Columbia</strain>
    </source>
</reference>
<reference key="5">
    <citation type="journal article" date="2004" name="Plant Cell">
        <title>SETH1 and SETH2, two components of the glycosylphosphatidylinositol anchor biosynthetic pathway, are required for pollen germination and tube growth in Arabidopsis.</title>
        <authorList>
            <person name="Lalanne E."/>
            <person name="Honys D."/>
            <person name="Johnson A."/>
            <person name="Borner G.H.H."/>
            <person name="Lilley K.S."/>
            <person name="Dupree P."/>
            <person name="Grossniklaus U."/>
            <person name="Twell D."/>
        </authorList>
    </citation>
    <scope>FUNCTION</scope>
    <scope>TISSUE SPECIFICITY</scope>
    <scope>DISRUPTION PHENOTYPE</scope>
</reference>
<gene>
    <name evidence="4" type="primary">PIGA</name>
    <name evidence="3" type="synonym">SETH2</name>
    <name evidence="5" type="ordered locus">At3g45100</name>
    <name evidence="6" type="ORF">T14D3.40</name>
</gene>
<feature type="chain" id="PRO_0000438104" description="Phosphatidylinositol N-acetylglucosaminyltransferase subunit A">
    <location>
        <begin position="1"/>
        <end position="447"/>
    </location>
</feature>
<feature type="topological domain" description="Cytoplasmic" evidence="4">
    <location>
        <begin position="1"/>
        <end position="387"/>
    </location>
</feature>
<feature type="transmembrane region" description="Helical" evidence="1">
    <location>
        <begin position="388"/>
        <end position="408"/>
    </location>
</feature>
<feature type="topological domain" description="Lumenal" evidence="4">
    <location>
        <begin position="409"/>
        <end position="447"/>
    </location>
</feature>
<sequence>MAEPPKLRVLMVSDFFFPNFGGVENHIYYLSQCLLKLGHKVVVMTHAYGNRSGVRYMTGGLKVYYVPWRPFVMQTTFPTVYGTLPIVRTILRREKITVVHGHQAFSTLCHEALMHARTMGYKVVFTDHSLYGFADVGSIHMNKVLQFSLADIDQAICVSHTSKENTVLRSGLSPAKVFMIPNAVDTAMFKPASVRPSTDIITIVVISRLVYRKGADLLVEVIPEVCRLYPNVRFVVGGDGPKHVRLEEMREKHSLQDRVEMLGAVPHSRVRSVLVTGHIFLNSSLTEAFCIAILEAASCGLLTVSTRVGGVPEVLPDDMVVLAEPDPDDMVRAIEKAISILPTINPEEMHNRMKKLYSWQDVAKRTEIVYDRALKCSNRSLLERLMRFLSCGAWAGKLFCMVMILDYLLWRLLQLLQPDEDIEEAPDICLCHHRGVEVSEGLRKKIK</sequence>
<comment type="function">
    <text evidence="2 4">Necessary for the synthesis of N-acetylglucosaminyl-phosphatidylinositol, the very early intermediate in GPI-anchor biosynthesis (Probable). Required for pollen germination and pollen tube growth (PubMed:14671020).</text>
</comment>
<comment type="catalytic activity">
    <reaction>
        <text>a 1,2-diacyl-sn-glycero-3-phospho-(1D-myo-inositol) + UDP-N-acetyl-alpha-D-glucosamine = a 6-(N-acetyl-alpha-D-glucosaminyl)-1-(1,2-diacyl-sn-glycero-3-phospho)-1D-myo-inositol + UDP + H(+)</text>
        <dbReference type="Rhea" id="RHEA:14789"/>
        <dbReference type="ChEBI" id="CHEBI:15378"/>
        <dbReference type="ChEBI" id="CHEBI:57265"/>
        <dbReference type="ChEBI" id="CHEBI:57705"/>
        <dbReference type="ChEBI" id="CHEBI:57880"/>
        <dbReference type="ChEBI" id="CHEBI:58223"/>
        <dbReference type="EC" id="2.4.1.198"/>
    </reaction>
</comment>
<comment type="pathway">
    <text evidence="4">Glycolipid biosynthesis; glycosylphosphatidylinositol-anchor biosynthesis.</text>
</comment>
<comment type="subcellular location">
    <subcellularLocation>
        <location evidence="4">Endoplasmic reticulum membrane</location>
        <topology evidence="1">Single-pass membrane protein</topology>
    </subcellularLocation>
</comment>
<comment type="tissue specificity">
    <text evidence="2">Expressed in roots, stems, leaves, flowers and pollen grains.</text>
</comment>
<comment type="disruption phenotype">
    <text evidence="2">Defective in pollen germination and pollen tube growth.</text>
</comment>
<comment type="similarity">
    <text evidence="4">Belongs to the glycosyltransferase group 1 family. Glycosyltransferase 4 subfamily.</text>
</comment>
<comment type="sequence caution" evidence="4">
    <conflict type="erroneous gene model prediction">
        <sequence resource="EMBL-CDS" id="CAB72148"/>
    </conflict>
</comment>
<organism>
    <name type="scientific">Arabidopsis thaliana</name>
    <name type="common">Mouse-ear cress</name>
    <dbReference type="NCBI Taxonomy" id="3702"/>
    <lineage>
        <taxon>Eukaryota</taxon>
        <taxon>Viridiplantae</taxon>
        <taxon>Streptophyta</taxon>
        <taxon>Embryophyta</taxon>
        <taxon>Tracheophyta</taxon>
        <taxon>Spermatophyta</taxon>
        <taxon>Magnoliopsida</taxon>
        <taxon>eudicotyledons</taxon>
        <taxon>Gunneridae</taxon>
        <taxon>Pentapetalae</taxon>
        <taxon>rosids</taxon>
        <taxon>malvids</taxon>
        <taxon>Brassicales</taxon>
        <taxon>Brassicaceae</taxon>
        <taxon>Camelineae</taxon>
        <taxon>Arabidopsis</taxon>
    </lineage>
</organism>
<evidence type="ECO:0000255" key="1"/>
<evidence type="ECO:0000269" key="2">
    <source>
    </source>
</evidence>
<evidence type="ECO:0000303" key="3">
    <source>
    </source>
</evidence>
<evidence type="ECO:0000305" key="4"/>
<evidence type="ECO:0000312" key="5">
    <source>
        <dbReference type="Araport" id="AT3G45100"/>
    </source>
</evidence>
<evidence type="ECO:0000312" key="6">
    <source>
        <dbReference type="EMBL" id="CAB72148.1"/>
    </source>
</evidence>
<accession>Q94BX4</accession>
<accession>Q9M1U9</accession>
<name>PIGA_ARATH</name>